<evidence type="ECO:0000305" key="1"/>
<reference key="1">
    <citation type="journal article" date="1999" name="Nat. Genet.">
        <title>Comparative genomes of Chlamydia pneumoniae and C. trachomatis.</title>
        <authorList>
            <person name="Kalman S."/>
            <person name="Mitchell W.P."/>
            <person name="Marathe R."/>
            <person name="Lammel C.J."/>
            <person name="Fan J."/>
            <person name="Hyman R.W."/>
            <person name="Olinger L."/>
            <person name="Grimwood J."/>
            <person name="Davis R.W."/>
            <person name="Stephens R.S."/>
        </authorList>
    </citation>
    <scope>NUCLEOTIDE SEQUENCE [LARGE SCALE GENOMIC DNA]</scope>
    <source>
        <strain>CWL029</strain>
    </source>
</reference>
<reference key="2">
    <citation type="journal article" date="2000" name="Nucleic Acids Res.">
        <title>Genome sequences of Chlamydia trachomatis MoPn and Chlamydia pneumoniae AR39.</title>
        <authorList>
            <person name="Read T.D."/>
            <person name="Brunham R.C."/>
            <person name="Shen C."/>
            <person name="Gill S.R."/>
            <person name="Heidelberg J.F."/>
            <person name="White O."/>
            <person name="Hickey E.K."/>
            <person name="Peterson J.D."/>
            <person name="Utterback T.R."/>
            <person name="Berry K.J."/>
            <person name="Bass S."/>
            <person name="Linher K.D."/>
            <person name="Weidman J.F."/>
            <person name="Khouri H.M."/>
            <person name="Craven B."/>
            <person name="Bowman C."/>
            <person name="Dodson R.J."/>
            <person name="Gwinn M.L."/>
            <person name="Nelson W.C."/>
            <person name="DeBoy R.T."/>
            <person name="Kolonay J.F."/>
            <person name="McClarty G."/>
            <person name="Salzberg S.L."/>
            <person name="Eisen J.A."/>
            <person name="Fraser C.M."/>
        </authorList>
    </citation>
    <scope>NUCLEOTIDE SEQUENCE [LARGE SCALE GENOMIC DNA]</scope>
    <source>
        <strain>AR39</strain>
    </source>
</reference>
<reference key="3">
    <citation type="journal article" date="2000" name="Nucleic Acids Res.">
        <title>Comparison of whole genome sequences of Chlamydia pneumoniae J138 from Japan and CWL029 from USA.</title>
        <authorList>
            <person name="Shirai M."/>
            <person name="Hirakawa H."/>
            <person name="Kimoto M."/>
            <person name="Tabuchi M."/>
            <person name="Kishi F."/>
            <person name="Ouchi K."/>
            <person name="Shiba T."/>
            <person name="Ishii K."/>
            <person name="Hattori M."/>
            <person name="Kuhara S."/>
            <person name="Nakazawa T."/>
        </authorList>
    </citation>
    <scope>NUCLEOTIDE SEQUENCE [LARGE SCALE GENOMIC DNA]</scope>
    <source>
        <strain>J138</strain>
    </source>
</reference>
<reference key="4">
    <citation type="submission" date="2002-05" db="EMBL/GenBank/DDBJ databases">
        <title>The genome sequence of Chlamydia pneumoniae TW183 and comparison with other Chlamydia strains based on whole genome sequence analysis.</title>
        <authorList>
            <person name="Geng M.M."/>
            <person name="Schuhmacher A."/>
            <person name="Muehldorfer I."/>
            <person name="Bensch K.W."/>
            <person name="Schaefer K.P."/>
            <person name="Schneider S."/>
            <person name="Pohl T."/>
            <person name="Essig A."/>
            <person name="Marre R."/>
            <person name="Melchers K."/>
        </authorList>
    </citation>
    <scope>NUCLEOTIDE SEQUENCE [LARGE SCALE GENOMIC DNA]</scope>
    <source>
        <strain>TW-183</strain>
    </source>
</reference>
<sequence>MAAKKDLLTQLRGKSDDDLDAYVHENKKALFALRAENLLQNKVVKVHMFSTHKKNIARALTVKQERKGKVHG</sequence>
<gene>
    <name type="primary">rpmC</name>
    <name type="synonym">rl29</name>
    <name type="ordered locus">CPn_0639</name>
    <name type="ordered locus">CP_0108</name>
    <name type="ordered locus">CpB0665</name>
</gene>
<organism>
    <name type="scientific">Chlamydia pneumoniae</name>
    <name type="common">Chlamydophila pneumoniae</name>
    <dbReference type="NCBI Taxonomy" id="83558"/>
    <lineage>
        <taxon>Bacteria</taxon>
        <taxon>Pseudomonadati</taxon>
        <taxon>Chlamydiota</taxon>
        <taxon>Chlamydiia</taxon>
        <taxon>Chlamydiales</taxon>
        <taxon>Chlamydiaceae</taxon>
        <taxon>Chlamydia/Chlamydophila group</taxon>
        <taxon>Chlamydia</taxon>
    </lineage>
</organism>
<feature type="chain" id="PRO_0000130373" description="Large ribosomal subunit protein uL29">
    <location>
        <begin position="1"/>
        <end position="72"/>
    </location>
</feature>
<feature type="sequence conflict" description="In Ref. 4; AAP98594." evidence="1" ref="4">
    <original>S</original>
    <variation>G</variation>
    <location>
        <position position="15"/>
    </location>
</feature>
<dbReference type="EMBL" id="AE001363">
    <property type="protein sequence ID" value="AAD18778.1"/>
    <property type="molecule type" value="Genomic_DNA"/>
</dbReference>
<dbReference type="EMBL" id="AE002161">
    <property type="protein sequence ID" value="AAF37991.1"/>
    <property type="molecule type" value="Genomic_DNA"/>
</dbReference>
<dbReference type="EMBL" id="BA000008">
    <property type="protein sequence ID" value="BAA98846.1"/>
    <property type="molecule type" value="Genomic_DNA"/>
</dbReference>
<dbReference type="EMBL" id="AE009440">
    <property type="protein sequence ID" value="AAP98594.1"/>
    <property type="molecule type" value="Genomic_DNA"/>
</dbReference>
<dbReference type="PIR" id="A72055">
    <property type="entry name" value="A72055"/>
</dbReference>
<dbReference type="PIR" id="D86570">
    <property type="entry name" value="D86570"/>
</dbReference>
<dbReference type="RefSeq" id="NP_224835.1">
    <property type="nucleotide sequence ID" value="NC_000922.1"/>
</dbReference>
<dbReference type="RefSeq" id="WP_010883277.1">
    <property type="nucleotide sequence ID" value="NZ_LN847257.1"/>
</dbReference>
<dbReference type="SMR" id="Q9Z7R5"/>
<dbReference type="STRING" id="406984.CPK_ORF00039"/>
<dbReference type="GeneID" id="45050689"/>
<dbReference type="KEGG" id="cpa:CP_0108"/>
<dbReference type="KEGG" id="cpj:rl29"/>
<dbReference type="KEGG" id="cpn:CPn_0639"/>
<dbReference type="KEGG" id="cpt:CpB0665"/>
<dbReference type="PATRIC" id="fig|115713.3.peg.709"/>
<dbReference type="eggNOG" id="COG0255">
    <property type="taxonomic scope" value="Bacteria"/>
</dbReference>
<dbReference type="HOGENOM" id="CLU_2715043_0_0_0"/>
<dbReference type="OMA" id="RSMTVMQ"/>
<dbReference type="OrthoDB" id="18593at2"/>
<dbReference type="Proteomes" id="UP000000583">
    <property type="component" value="Chromosome"/>
</dbReference>
<dbReference type="Proteomes" id="UP000000801">
    <property type="component" value="Chromosome"/>
</dbReference>
<dbReference type="GO" id="GO:0022625">
    <property type="term" value="C:cytosolic large ribosomal subunit"/>
    <property type="evidence" value="ECO:0007669"/>
    <property type="project" value="TreeGrafter"/>
</dbReference>
<dbReference type="GO" id="GO:0003735">
    <property type="term" value="F:structural constituent of ribosome"/>
    <property type="evidence" value="ECO:0007669"/>
    <property type="project" value="InterPro"/>
</dbReference>
<dbReference type="GO" id="GO:0006412">
    <property type="term" value="P:translation"/>
    <property type="evidence" value="ECO:0007669"/>
    <property type="project" value="UniProtKB-UniRule"/>
</dbReference>
<dbReference type="CDD" id="cd00427">
    <property type="entry name" value="Ribosomal_L29_HIP"/>
    <property type="match status" value="1"/>
</dbReference>
<dbReference type="Gene3D" id="1.10.287.310">
    <property type="match status" value="1"/>
</dbReference>
<dbReference type="HAMAP" id="MF_00374">
    <property type="entry name" value="Ribosomal_uL29"/>
    <property type="match status" value="1"/>
</dbReference>
<dbReference type="InterPro" id="IPR050063">
    <property type="entry name" value="Ribosomal_protein_uL29"/>
</dbReference>
<dbReference type="InterPro" id="IPR001854">
    <property type="entry name" value="Ribosomal_uL29"/>
</dbReference>
<dbReference type="InterPro" id="IPR036049">
    <property type="entry name" value="Ribosomal_uL29_sf"/>
</dbReference>
<dbReference type="NCBIfam" id="TIGR00012">
    <property type="entry name" value="L29"/>
    <property type="match status" value="1"/>
</dbReference>
<dbReference type="PANTHER" id="PTHR10916">
    <property type="entry name" value="60S RIBOSOMAL PROTEIN L35/50S RIBOSOMAL PROTEIN L29"/>
    <property type="match status" value="1"/>
</dbReference>
<dbReference type="PANTHER" id="PTHR10916:SF0">
    <property type="entry name" value="LARGE RIBOSOMAL SUBUNIT PROTEIN UL29C"/>
    <property type="match status" value="1"/>
</dbReference>
<dbReference type="Pfam" id="PF00831">
    <property type="entry name" value="Ribosomal_L29"/>
    <property type="match status" value="1"/>
</dbReference>
<dbReference type="SUPFAM" id="SSF46561">
    <property type="entry name" value="Ribosomal protein L29 (L29p)"/>
    <property type="match status" value="1"/>
</dbReference>
<comment type="similarity">
    <text evidence="1">Belongs to the universal ribosomal protein uL29 family.</text>
</comment>
<proteinExistence type="inferred from homology"/>
<name>RL29_CHLPN</name>
<accession>Q9Z7R5</accession>
<accession>Q9JQG5</accession>
<keyword id="KW-0687">Ribonucleoprotein</keyword>
<keyword id="KW-0689">Ribosomal protein</keyword>
<protein>
    <recommendedName>
        <fullName evidence="1">Large ribosomal subunit protein uL29</fullName>
    </recommendedName>
    <alternativeName>
        <fullName>50S ribosomal protein L29</fullName>
    </alternativeName>
</protein>